<protein>
    <recommendedName>
        <fullName evidence="1">Uridylate kinase</fullName>
        <shortName evidence="1">UK</shortName>
        <ecNumber evidence="1">2.7.4.22</ecNumber>
    </recommendedName>
    <alternativeName>
        <fullName evidence="1">Uridine monophosphate kinase</fullName>
        <shortName evidence="1">UMP kinase</shortName>
        <shortName evidence="1">UMPK</shortName>
    </alternativeName>
</protein>
<reference key="1">
    <citation type="journal article" date="2009" name="Proc. Natl. Acad. Sci. U.S.A.">
        <title>Biogeography of the Sulfolobus islandicus pan-genome.</title>
        <authorList>
            <person name="Reno M.L."/>
            <person name="Held N.L."/>
            <person name="Fields C.J."/>
            <person name="Burke P.V."/>
            <person name="Whitaker R.J."/>
        </authorList>
    </citation>
    <scope>NUCLEOTIDE SEQUENCE [LARGE SCALE GENOMIC DNA]</scope>
    <source>
        <strain>Y.G.57.14 / Yellowstone #1</strain>
    </source>
</reference>
<organism>
    <name type="scientific">Saccharolobus islandicus (strain Y.G.57.14 / Yellowstone #1)</name>
    <name type="common">Sulfolobus islandicus</name>
    <dbReference type="NCBI Taxonomy" id="439386"/>
    <lineage>
        <taxon>Archaea</taxon>
        <taxon>Thermoproteota</taxon>
        <taxon>Thermoprotei</taxon>
        <taxon>Sulfolobales</taxon>
        <taxon>Sulfolobaceae</taxon>
        <taxon>Saccharolobus</taxon>
    </lineage>
</organism>
<proteinExistence type="inferred from homology"/>
<gene>
    <name evidence="1" type="primary">pyrH</name>
    <name type="ordered locus">YG5714_1232</name>
</gene>
<name>PYRH_SACI7</name>
<sequence length="226" mass="25050">MNIILKISGKFFDEDNVNNLIVLRESIRELTDNGFRVGIVTGGGSTARRYIKLAREIGIGEAYLDLLGIWASRLNAYLVMFSLQDLAYMHVPQSLEEFIQDWSHGKVVVTGGFQPGQSTAAVAALVAEASSSKTLVVATNVDGVYEKDPRVYTDVKLIPHLTTQDLRKILEGSQSVQAGTYELLDPLAIKIVERSKIRVVVMNYRKLNRIINILKGEEVSSIIEPT</sequence>
<dbReference type="EC" id="2.7.4.22" evidence="1"/>
<dbReference type="EMBL" id="CP001403">
    <property type="protein sequence ID" value="ACP45498.1"/>
    <property type="molecule type" value="Genomic_DNA"/>
</dbReference>
<dbReference type="RefSeq" id="WP_012711255.1">
    <property type="nucleotide sequence ID" value="NC_012622.1"/>
</dbReference>
<dbReference type="SMR" id="C3NDV9"/>
<dbReference type="GeneID" id="84061562"/>
<dbReference type="KEGG" id="siy:YG5714_1232"/>
<dbReference type="HOGENOM" id="CLU_079546_0_0_2"/>
<dbReference type="UniPathway" id="UPA00159">
    <property type="reaction ID" value="UER00275"/>
</dbReference>
<dbReference type="Proteomes" id="UP000002308">
    <property type="component" value="Chromosome"/>
</dbReference>
<dbReference type="GO" id="GO:0005737">
    <property type="term" value="C:cytoplasm"/>
    <property type="evidence" value="ECO:0007669"/>
    <property type="project" value="UniProtKB-SubCell"/>
</dbReference>
<dbReference type="GO" id="GO:0005524">
    <property type="term" value="F:ATP binding"/>
    <property type="evidence" value="ECO:0007669"/>
    <property type="project" value="UniProtKB-KW"/>
</dbReference>
<dbReference type="GO" id="GO:0033862">
    <property type="term" value="F:UMP kinase activity"/>
    <property type="evidence" value="ECO:0007669"/>
    <property type="project" value="UniProtKB-EC"/>
</dbReference>
<dbReference type="GO" id="GO:0044210">
    <property type="term" value="P:'de novo' CTP biosynthetic process"/>
    <property type="evidence" value="ECO:0007669"/>
    <property type="project" value="UniProtKB-UniRule"/>
</dbReference>
<dbReference type="GO" id="GO:0006225">
    <property type="term" value="P:UDP biosynthetic process"/>
    <property type="evidence" value="ECO:0007669"/>
    <property type="project" value="TreeGrafter"/>
</dbReference>
<dbReference type="CDD" id="cd04253">
    <property type="entry name" value="AAK_UMPK-PyrH-Pf"/>
    <property type="match status" value="1"/>
</dbReference>
<dbReference type="FunFam" id="3.40.1160.10:FF:000030">
    <property type="entry name" value="Uridylate kinase"/>
    <property type="match status" value="1"/>
</dbReference>
<dbReference type="Gene3D" id="3.40.1160.10">
    <property type="entry name" value="Acetylglutamate kinase-like"/>
    <property type="match status" value="1"/>
</dbReference>
<dbReference type="HAMAP" id="MF_01220_A">
    <property type="entry name" value="PyrH_A"/>
    <property type="match status" value="1"/>
</dbReference>
<dbReference type="InterPro" id="IPR036393">
    <property type="entry name" value="AceGlu_kinase-like_sf"/>
</dbReference>
<dbReference type="InterPro" id="IPR001048">
    <property type="entry name" value="Asp/Glu/Uridylate_kinase"/>
</dbReference>
<dbReference type="InterPro" id="IPR011817">
    <property type="entry name" value="Uridylate_kinase"/>
</dbReference>
<dbReference type="InterPro" id="IPR011818">
    <property type="entry name" value="Uridylate_kinase_arch/spir"/>
</dbReference>
<dbReference type="NCBIfam" id="TIGR02076">
    <property type="entry name" value="pyrH_arch"/>
    <property type="match status" value="1"/>
</dbReference>
<dbReference type="PANTHER" id="PTHR42833">
    <property type="entry name" value="URIDYLATE KINASE"/>
    <property type="match status" value="1"/>
</dbReference>
<dbReference type="PANTHER" id="PTHR42833:SF4">
    <property type="entry name" value="URIDYLATE KINASE PUMPKIN, CHLOROPLASTIC"/>
    <property type="match status" value="1"/>
</dbReference>
<dbReference type="Pfam" id="PF00696">
    <property type="entry name" value="AA_kinase"/>
    <property type="match status" value="1"/>
</dbReference>
<dbReference type="PIRSF" id="PIRSF005650">
    <property type="entry name" value="Uridylate_kin"/>
    <property type="match status" value="1"/>
</dbReference>
<dbReference type="SUPFAM" id="SSF53633">
    <property type="entry name" value="Carbamate kinase-like"/>
    <property type="match status" value="1"/>
</dbReference>
<accession>C3NDV9</accession>
<comment type="function">
    <text evidence="1">Catalyzes the reversible phosphorylation of UMP to UDP.</text>
</comment>
<comment type="catalytic activity">
    <reaction evidence="1">
        <text>UMP + ATP = UDP + ADP</text>
        <dbReference type="Rhea" id="RHEA:24400"/>
        <dbReference type="ChEBI" id="CHEBI:30616"/>
        <dbReference type="ChEBI" id="CHEBI:57865"/>
        <dbReference type="ChEBI" id="CHEBI:58223"/>
        <dbReference type="ChEBI" id="CHEBI:456216"/>
        <dbReference type="EC" id="2.7.4.22"/>
    </reaction>
</comment>
<comment type="activity regulation">
    <text evidence="1">Inhibited by UTP.</text>
</comment>
<comment type="pathway">
    <text evidence="1">Pyrimidine metabolism; CTP biosynthesis via de novo pathway; UDP from UMP (UMPK route): step 1/1.</text>
</comment>
<comment type="subunit">
    <text evidence="1">Homohexamer.</text>
</comment>
<comment type="subcellular location">
    <subcellularLocation>
        <location evidence="1">Cytoplasm</location>
    </subcellularLocation>
</comment>
<comment type="similarity">
    <text evidence="1">Belongs to the UMP kinase family.</text>
</comment>
<feature type="chain" id="PRO_1000213959" description="Uridylate kinase">
    <location>
        <begin position="1"/>
        <end position="226"/>
    </location>
</feature>
<feature type="binding site" evidence="1">
    <location>
        <begin position="6"/>
        <end position="10"/>
    </location>
    <ligand>
        <name>ATP</name>
        <dbReference type="ChEBI" id="CHEBI:30616"/>
    </ligand>
</feature>
<feature type="binding site" evidence="1">
    <location>
        <position position="43"/>
    </location>
    <ligand>
        <name>UMP</name>
        <dbReference type="ChEBI" id="CHEBI:57865"/>
    </ligand>
</feature>
<feature type="binding site" evidence="1">
    <location>
        <position position="44"/>
    </location>
    <ligand>
        <name>ATP</name>
        <dbReference type="ChEBI" id="CHEBI:30616"/>
    </ligand>
</feature>
<feature type="binding site" evidence="1">
    <location>
        <position position="48"/>
    </location>
    <ligand>
        <name>ATP</name>
        <dbReference type="ChEBI" id="CHEBI:30616"/>
    </ligand>
</feature>
<feature type="binding site" evidence="1">
    <location>
        <position position="65"/>
    </location>
    <ligand>
        <name>UMP</name>
        <dbReference type="ChEBI" id="CHEBI:57865"/>
    </ligand>
</feature>
<feature type="binding site" evidence="1">
    <location>
        <begin position="113"/>
        <end position="119"/>
    </location>
    <ligand>
        <name>UMP</name>
        <dbReference type="ChEBI" id="CHEBI:57865"/>
    </ligand>
</feature>
<feature type="binding site" evidence="1">
    <location>
        <position position="139"/>
    </location>
    <ligand>
        <name>ATP</name>
        <dbReference type="ChEBI" id="CHEBI:30616"/>
    </ligand>
</feature>
<feature type="binding site" evidence="1">
    <location>
        <position position="140"/>
    </location>
    <ligand>
        <name>ATP</name>
        <dbReference type="ChEBI" id="CHEBI:30616"/>
    </ligand>
</feature>
<feature type="binding site" evidence="1">
    <location>
        <position position="145"/>
    </location>
    <ligand>
        <name>ATP</name>
        <dbReference type="ChEBI" id="CHEBI:30616"/>
    </ligand>
</feature>
<feature type="binding site" evidence="1">
    <location>
        <position position="148"/>
    </location>
    <ligand>
        <name>ATP</name>
        <dbReference type="ChEBI" id="CHEBI:30616"/>
    </ligand>
</feature>
<evidence type="ECO:0000255" key="1">
    <source>
        <dbReference type="HAMAP-Rule" id="MF_01220"/>
    </source>
</evidence>
<keyword id="KW-0067">ATP-binding</keyword>
<keyword id="KW-0963">Cytoplasm</keyword>
<keyword id="KW-0418">Kinase</keyword>
<keyword id="KW-0547">Nucleotide-binding</keyword>
<keyword id="KW-0665">Pyrimidine biosynthesis</keyword>
<keyword id="KW-0808">Transferase</keyword>